<sequence length="644" mass="69493">MSPRPLIELQDITRSFGEGELAVPVLKGIDLKIWPGEFVAIMGPSGSGKSTLMNILGCLDQPSAGQYRFNGRDVSALDRDELARLRRDAFGFVFQSYNLLPGMTARENVEIPAIYAGMAPAERHARAERLLTGLGLGERLSHRPAQLSGGQQQRVSIARALMNGGQLIFADEPTGALDSKSSQEVIRLLTDLSRQGHTIILITHDPDVAKVARRQIRIADGELVEDTGAEMPSAQIPETDQNGRRHSRLGDWQEALKSAVRSLHSNLFRTALTLLGIVIGVASVITMLAIGEGARKDVVDRISTMGSDLLLVRPGGPDQRGGRWSVTTLVPSDFKAINEIEGVLAAIPELTGGQTLRYSNRDHSAEINATSFRFPVARQWPVVEGTFFSAQDEASYAAVAVLGKTTANALFPDESPLGKHLMVNNVLFQVIGVMDEKGASPMGQDQDDVVFVPYTTGSLRIFGQTHLRNITVAVADIDRMDEIEALIHDTLMARHGIEDFTIRNMASLIETISETQNTLTWLLGSIAAISLLVGGIGVMNIMLVSVTERTREIGIRMATGARAWNILQQFLTEAWLVSAIGGLIGVVIGIAATRIIGSLGTPIHMTLLPMALAFGCAFATGLLFGFLPARKAAHLDPVHALASE</sequence>
<name>MACB_MARN8</name>
<reference key="1">
    <citation type="journal article" date="2011" name="Appl. Environ. Microbiol.">
        <title>Genomic potential of Marinobacter aquaeolei, a biogeochemical 'opportunitroph'.</title>
        <authorList>
            <person name="Singer E."/>
            <person name="Webb E.A."/>
            <person name="Nelson W.C."/>
            <person name="Heidelberg J.F."/>
            <person name="Ivanova N."/>
            <person name="Pati A."/>
            <person name="Edwards K.J."/>
        </authorList>
    </citation>
    <scope>NUCLEOTIDE SEQUENCE [LARGE SCALE GENOMIC DNA]</scope>
    <source>
        <strain>ATCC 700491 / DSM 11845 / VT8</strain>
    </source>
</reference>
<evidence type="ECO:0000255" key="1">
    <source>
        <dbReference type="HAMAP-Rule" id="MF_01720"/>
    </source>
</evidence>
<dbReference type="EC" id="7.6.2.-" evidence="1"/>
<dbReference type="EMBL" id="CP000514">
    <property type="protein sequence ID" value="ABM18428.1"/>
    <property type="molecule type" value="Genomic_DNA"/>
</dbReference>
<dbReference type="RefSeq" id="WP_011784832.1">
    <property type="nucleotide sequence ID" value="NC_008740.1"/>
</dbReference>
<dbReference type="SMR" id="A1U0A9"/>
<dbReference type="STRING" id="351348.Maqu_1340"/>
<dbReference type="KEGG" id="maq:Maqu_1340"/>
<dbReference type="eggNOG" id="COG0577">
    <property type="taxonomic scope" value="Bacteria"/>
</dbReference>
<dbReference type="eggNOG" id="COG1136">
    <property type="taxonomic scope" value="Bacteria"/>
</dbReference>
<dbReference type="HOGENOM" id="CLU_000604_78_2_6"/>
<dbReference type="OrthoDB" id="9770036at2"/>
<dbReference type="Proteomes" id="UP000000998">
    <property type="component" value="Chromosome"/>
</dbReference>
<dbReference type="GO" id="GO:0005886">
    <property type="term" value="C:plasma membrane"/>
    <property type="evidence" value="ECO:0007669"/>
    <property type="project" value="UniProtKB-SubCell"/>
</dbReference>
<dbReference type="GO" id="GO:0005524">
    <property type="term" value="F:ATP binding"/>
    <property type="evidence" value="ECO:0007669"/>
    <property type="project" value="UniProtKB-KW"/>
</dbReference>
<dbReference type="GO" id="GO:0016887">
    <property type="term" value="F:ATP hydrolysis activity"/>
    <property type="evidence" value="ECO:0007669"/>
    <property type="project" value="InterPro"/>
</dbReference>
<dbReference type="GO" id="GO:0022857">
    <property type="term" value="F:transmembrane transporter activity"/>
    <property type="evidence" value="ECO:0007669"/>
    <property type="project" value="TreeGrafter"/>
</dbReference>
<dbReference type="GO" id="GO:0046677">
    <property type="term" value="P:response to antibiotic"/>
    <property type="evidence" value="ECO:0007669"/>
    <property type="project" value="UniProtKB-KW"/>
</dbReference>
<dbReference type="CDD" id="cd03255">
    <property type="entry name" value="ABC_MJ0796_LolCDE_FtsE"/>
    <property type="match status" value="1"/>
</dbReference>
<dbReference type="FunFam" id="3.40.50.300:FF:000032">
    <property type="entry name" value="Export ABC transporter ATP-binding protein"/>
    <property type="match status" value="1"/>
</dbReference>
<dbReference type="Gene3D" id="3.40.50.300">
    <property type="entry name" value="P-loop containing nucleotide triphosphate hydrolases"/>
    <property type="match status" value="1"/>
</dbReference>
<dbReference type="InterPro" id="IPR003593">
    <property type="entry name" value="AAA+_ATPase"/>
</dbReference>
<dbReference type="InterPro" id="IPR003838">
    <property type="entry name" value="ABC3_permease_C"/>
</dbReference>
<dbReference type="InterPro" id="IPR003439">
    <property type="entry name" value="ABC_transporter-like_ATP-bd"/>
</dbReference>
<dbReference type="InterPro" id="IPR017871">
    <property type="entry name" value="ABC_transporter-like_CS"/>
</dbReference>
<dbReference type="InterPro" id="IPR017911">
    <property type="entry name" value="MacB-like_ATP-bd"/>
</dbReference>
<dbReference type="InterPro" id="IPR025857">
    <property type="entry name" value="MacB_PCD"/>
</dbReference>
<dbReference type="InterPro" id="IPR050250">
    <property type="entry name" value="Macrolide_Exporter_MacB"/>
</dbReference>
<dbReference type="InterPro" id="IPR027417">
    <property type="entry name" value="P-loop_NTPase"/>
</dbReference>
<dbReference type="PANTHER" id="PTHR30572:SF4">
    <property type="entry name" value="ABC TRANSPORTER PERMEASE YTRF"/>
    <property type="match status" value="1"/>
</dbReference>
<dbReference type="PANTHER" id="PTHR30572">
    <property type="entry name" value="MEMBRANE COMPONENT OF TRANSPORTER-RELATED"/>
    <property type="match status" value="1"/>
</dbReference>
<dbReference type="Pfam" id="PF00005">
    <property type="entry name" value="ABC_tran"/>
    <property type="match status" value="1"/>
</dbReference>
<dbReference type="Pfam" id="PF02687">
    <property type="entry name" value="FtsX"/>
    <property type="match status" value="1"/>
</dbReference>
<dbReference type="Pfam" id="PF12704">
    <property type="entry name" value="MacB_PCD"/>
    <property type="match status" value="1"/>
</dbReference>
<dbReference type="SMART" id="SM00382">
    <property type="entry name" value="AAA"/>
    <property type="match status" value="1"/>
</dbReference>
<dbReference type="SUPFAM" id="SSF52540">
    <property type="entry name" value="P-loop containing nucleoside triphosphate hydrolases"/>
    <property type="match status" value="1"/>
</dbReference>
<dbReference type="PROSITE" id="PS00211">
    <property type="entry name" value="ABC_TRANSPORTER_1"/>
    <property type="match status" value="1"/>
</dbReference>
<dbReference type="PROSITE" id="PS50893">
    <property type="entry name" value="ABC_TRANSPORTER_2"/>
    <property type="match status" value="1"/>
</dbReference>
<dbReference type="PROSITE" id="PS51267">
    <property type="entry name" value="MACB"/>
    <property type="match status" value="1"/>
</dbReference>
<feature type="chain" id="PRO_0000280168" description="Macrolide export ATP-binding/permease protein MacB">
    <location>
        <begin position="1"/>
        <end position="644"/>
    </location>
</feature>
<feature type="transmembrane region" description="Helical" evidence="1">
    <location>
        <begin position="271"/>
        <end position="291"/>
    </location>
</feature>
<feature type="transmembrane region" description="Helical" evidence="1">
    <location>
        <begin position="526"/>
        <end position="546"/>
    </location>
</feature>
<feature type="transmembrane region" description="Helical" evidence="1">
    <location>
        <begin position="570"/>
        <end position="590"/>
    </location>
</feature>
<feature type="transmembrane region" description="Helical" evidence="1">
    <location>
        <begin position="607"/>
        <end position="627"/>
    </location>
</feature>
<feature type="domain" description="ABC transporter" evidence="1">
    <location>
        <begin position="7"/>
        <end position="245"/>
    </location>
</feature>
<feature type="binding site" evidence="1">
    <location>
        <begin position="43"/>
        <end position="50"/>
    </location>
    <ligand>
        <name>ATP</name>
        <dbReference type="ChEBI" id="CHEBI:30616"/>
    </ligand>
</feature>
<proteinExistence type="inferred from homology"/>
<protein>
    <recommendedName>
        <fullName evidence="1">Macrolide export ATP-binding/permease protein MacB</fullName>
        <ecNumber evidence="1">7.6.2.-</ecNumber>
    </recommendedName>
</protein>
<comment type="function">
    <text evidence="1">Part of the tripartite efflux system MacAB-TolC. MacB is a non-canonical ABC transporter that contains transmembrane domains (TMD), which form a pore in the inner membrane, and an ATP-binding domain (NBD), which is responsible for energy generation. Confers resistance against macrolides.</text>
</comment>
<comment type="subunit">
    <text evidence="1">Homodimer. Part of the tripartite efflux system MacAB-TolC, which is composed of an inner membrane transporter, MacB, a periplasmic membrane fusion protein, MacA, and an outer membrane component, TolC. The complex forms a large protein conduit and can translocate molecules across both the inner and outer membranes. Interacts with MacA.</text>
</comment>
<comment type="subcellular location">
    <subcellularLocation>
        <location evidence="1">Cell inner membrane</location>
        <topology evidence="1">Multi-pass membrane protein</topology>
    </subcellularLocation>
</comment>
<comment type="similarity">
    <text evidence="1">Belongs to the ABC transporter superfamily. Macrolide exporter (TC 3.A.1.122) family.</text>
</comment>
<gene>
    <name evidence="1" type="primary">macB</name>
    <name type="ordered locus">Maqu_1340</name>
</gene>
<organism>
    <name type="scientific">Marinobacter nauticus (strain ATCC 700491 / DSM 11845 / VT8)</name>
    <name type="common">Marinobacter aquaeolei</name>
    <dbReference type="NCBI Taxonomy" id="351348"/>
    <lineage>
        <taxon>Bacteria</taxon>
        <taxon>Pseudomonadati</taxon>
        <taxon>Pseudomonadota</taxon>
        <taxon>Gammaproteobacteria</taxon>
        <taxon>Pseudomonadales</taxon>
        <taxon>Marinobacteraceae</taxon>
        <taxon>Marinobacter</taxon>
    </lineage>
</organism>
<accession>A1U0A9</accession>
<keyword id="KW-0046">Antibiotic resistance</keyword>
<keyword id="KW-0067">ATP-binding</keyword>
<keyword id="KW-0997">Cell inner membrane</keyword>
<keyword id="KW-1003">Cell membrane</keyword>
<keyword id="KW-0472">Membrane</keyword>
<keyword id="KW-0547">Nucleotide-binding</keyword>
<keyword id="KW-1278">Translocase</keyword>
<keyword id="KW-0812">Transmembrane</keyword>
<keyword id="KW-1133">Transmembrane helix</keyword>
<keyword id="KW-0813">Transport</keyword>